<proteinExistence type="inferred from homology"/>
<sequence length="339" mass="35117">MSASGLPFDDFRELIRNLPGPDLGAERAVREREVTLTKPAGSLGRLEEIVAWLATWTGKRTPQVNRPLVAVFAGNHGVTAKNITPFPPSVTAQMVENFAAGGAAINQICIANDLGLKVFDLALEHPTGDITEEAAMDEHTCAATMAFGMEAIAGGTDLLCIGEMGIGNTTIAAAIALALFGGTAEDWVGPGTGSTGELMQRKLAAVRQAVALHQPHLQDPLEVLRCLGGREIAAMAGAILAARMEKIPVIVDGFVASAAAAVLYAANPEAIDHCMFGHVSAEPGHRKLLAKMGKEPLLDLGMRLGEGTGAALAANIVKAAALCHSGMATFEQAGVSASK</sequence>
<keyword id="KW-0169">Cobalamin biosynthesis</keyword>
<keyword id="KW-0328">Glycosyltransferase</keyword>
<keyword id="KW-0808">Transferase</keyword>
<evidence type="ECO:0000255" key="1">
    <source>
        <dbReference type="HAMAP-Rule" id="MF_00230"/>
    </source>
</evidence>
<dbReference type="EC" id="2.4.2.21" evidence="1"/>
<dbReference type="EMBL" id="AE017223">
    <property type="protein sequence ID" value="AAX74245.1"/>
    <property type="molecule type" value="Genomic_DNA"/>
</dbReference>
<dbReference type="RefSeq" id="WP_002963997.1">
    <property type="nucleotide sequence ID" value="NC_006932.1"/>
</dbReference>
<dbReference type="SMR" id="Q57DN9"/>
<dbReference type="EnsemblBacteria" id="AAX74245">
    <property type="protein sequence ID" value="AAX74245"/>
    <property type="gene ID" value="BruAb1_0879"/>
</dbReference>
<dbReference type="GeneID" id="93016754"/>
<dbReference type="KEGG" id="bmb:BruAb1_0879"/>
<dbReference type="HOGENOM" id="CLU_002982_0_1_5"/>
<dbReference type="UniPathway" id="UPA00061">
    <property type="reaction ID" value="UER00516"/>
</dbReference>
<dbReference type="Proteomes" id="UP000000540">
    <property type="component" value="Chromosome I"/>
</dbReference>
<dbReference type="GO" id="GO:0008939">
    <property type="term" value="F:nicotinate-nucleotide-dimethylbenzimidazole phosphoribosyltransferase activity"/>
    <property type="evidence" value="ECO:0007669"/>
    <property type="project" value="UniProtKB-UniRule"/>
</dbReference>
<dbReference type="GO" id="GO:0009236">
    <property type="term" value="P:cobalamin biosynthetic process"/>
    <property type="evidence" value="ECO:0007669"/>
    <property type="project" value="UniProtKB-KW"/>
</dbReference>
<dbReference type="CDD" id="cd02439">
    <property type="entry name" value="DMB-PRT_CobT"/>
    <property type="match status" value="1"/>
</dbReference>
<dbReference type="Gene3D" id="1.10.1610.10">
    <property type="match status" value="1"/>
</dbReference>
<dbReference type="Gene3D" id="3.40.50.10210">
    <property type="match status" value="1"/>
</dbReference>
<dbReference type="HAMAP" id="MF_00230">
    <property type="entry name" value="CobT"/>
    <property type="match status" value="1"/>
</dbReference>
<dbReference type="InterPro" id="IPR003200">
    <property type="entry name" value="Nict_dMeBzImd_PRibTrfase"/>
</dbReference>
<dbReference type="InterPro" id="IPR017846">
    <property type="entry name" value="Nict_dMeBzImd_PRibTrfase_bact"/>
</dbReference>
<dbReference type="InterPro" id="IPR023195">
    <property type="entry name" value="Nict_dMeBzImd_PRibTrfase_N"/>
</dbReference>
<dbReference type="InterPro" id="IPR036087">
    <property type="entry name" value="Nict_dMeBzImd_PRibTrfase_sf"/>
</dbReference>
<dbReference type="NCBIfam" id="TIGR03160">
    <property type="entry name" value="cobT_DBIPRT"/>
    <property type="match status" value="1"/>
</dbReference>
<dbReference type="NCBIfam" id="NF000996">
    <property type="entry name" value="PRK00105.1"/>
    <property type="match status" value="1"/>
</dbReference>
<dbReference type="PANTHER" id="PTHR43463">
    <property type="entry name" value="NICOTINATE-NUCLEOTIDE--DIMETHYLBENZIMIDAZOLE PHOSPHORIBOSYLTRANSFERASE"/>
    <property type="match status" value="1"/>
</dbReference>
<dbReference type="PANTHER" id="PTHR43463:SF1">
    <property type="entry name" value="NICOTINATE-NUCLEOTIDE--DIMETHYLBENZIMIDAZOLE PHOSPHORIBOSYLTRANSFERASE"/>
    <property type="match status" value="1"/>
</dbReference>
<dbReference type="Pfam" id="PF02277">
    <property type="entry name" value="DBI_PRT"/>
    <property type="match status" value="1"/>
</dbReference>
<dbReference type="SUPFAM" id="SSF52733">
    <property type="entry name" value="Nicotinate mononucleotide:5,6-dimethylbenzimidazole phosphoribosyltransferase (CobT)"/>
    <property type="match status" value="1"/>
</dbReference>
<reference key="1">
    <citation type="journal article" date="2005" name="J. Bacteriol.">
        <title>Completion of the genome sequence of Brucella abortus and comparison to the highly similar genomes of Brucella melitensis and Brucella suis.</title>
        <authorList>
            <person name="Halling S.M."/>
            <person name="Peterson-Burch B.D."/>
            <person name="Bricker B.J."/>
            <person name="Zuerner R.L."/>
            <person name="Qing Z."/>
            <person name="Li L.-L."/>
            <person name="Kapur V."/>
            <person name="Alt D.P."/>
            <person name="Olsen S.C."/>
        </authorList>
    </citation>
    <scope>NUCLEOTIDE SEQUENCE [LARGE SCALE GENOMIC DNA]</scope>
    <source>
        <strain>9-941</strain>
    </source>
</reference>
<accession>Q57DN9</accession>
<comment type="function">
    <text evidence="1">Catalyzes the synthesis of alpha-ribazole-5'-phosphate from nicotinate mononucleotide (NAMN) and 5,6-dimethylbenzimidazole (DMB).</text>
</comment>
<comment type="catalytic activity">
    <reaction evidence="1">
        <text>5,6-dimethylbenzimidazole + nicotinate beta-D-ribonucleotide = alpha-ribazole 5'-phosphate + nicotinate + H(+)</text>
        <dbReference type="Rhea" id="RHEA:11196"/>
        <dbReference type="ChEBI" id="CHEBI:15378"/>
        <dbReference type="ChEBI" id="CHEBI:15890"/>
        <dbReference type="ChEBI" id="CHEBI:32544"/>
        <dbReference type="ChEBI" id="CHEBI:57502"/>
        <dbReference type="ChEBI" id="CHEBI:57918"/>
        <dbReference type="EC" id="2.4.2.21"/>
    </reaction>
</comment>
<comment type="pathway">
    <text evidence="1">Nucleoside biosynthesis; alpha-ribazole biosynthesis; alpha-ribazole from 5,6-dimethylbenzimidazole: step 1/2.</text>
</comment>
<comment type="similarity">
    <text evidence="1">Belongs to the CobT family.</text>
</comment>
<organism>
    <name type="scientific">Brucella abortus biovar 1 (strain 9-941)</name>
    <dbReference type="NCBI Taxonomy" id="262698"/>
    <lineage>
        <taxon>Bacteria</taxon>
        <taxon>Pseudomonadati</taxon>
        <taxon>Pseudomonadota</taxon>
        <taxon>Alphaproteobacteria</taxon>
        <taxon>Hyphomicrobiales</taxon>
        <taxon>Brucellaceae</taxon>
        <taxon>Brucella/Ochrobactrum group</taxon>
        <taxon>Brucella</taxon>
    </lineage>
</organism>
<gene>
    <name evidence="1" type="primary">cobT</name>
    <name type="ordered locus">BruAb1_0879</name>
</gene>
<name>COBT_BRUAB</name>
<protein>
    <recommendedName>
        <fullName evidence="1">Nicotinate-nucleotide--dimethylbenzimidazole phosphoribosyltransferase</fullName>
        <shortName evidence="1">NN:DBI PRT</shortName>
        <ecNumber evidence="1">2.4.2.21</ecNumber>
    </recommendedName>
    <alternativeName>
        <fullName evidence="1">N(1)-alpha-phosphoribosyltransferase</fullName>
    </alternativeName>
</protein>
<feature type="chain" id="PRO_1000021581" description="Nicotinate-nucleotide--dimethylbenzimidazole phosphoribosyltransferase">
    <location>
        <begin position="1"/>
        <end position="339"/>
    </location>
</feature>
<feature type="active site" description="Proton acceptor" evidence="1">
    <location>
        <position position="306"/>
    </location>
</feature>